<dbReference type="EMBL" id="CP000423">
    <property type="protein sequence ID" value="ABJ70377.1"/>
    <property type="molecule type" value="Genomic_DNA"/>
</dbReference>
<dbReference type="RefSeq" id="WP_003564749.1">
    <property type="nucleotide sequence ID" value="NC_008526.1"/>
</dbReference>
<dbReference type="RefSeq" id="YP_806819.1">
    <property type="nucleotide sequence ID" value="NC_008526.1"/>
</dbReference>
<dbReference type="SMR" id="Q038J5"/>
<dbReference type="STRING" id="321967.LSEI_1603"/>
<dbReference type="PaxDb" id="321967-LSEI_1603"/>
<dbReference type="KEGG" id="lca:LSEI_1603"/>
<dbReference type="PATRIC" id="fig|321967.11.peg.1584"/>
<dbReference type="HOGENOM" id="CLU_129218_1_0_9"/>
<dbReference type="Proteomes" id="UP000001651">
    <property type="component" value="Chromosome"/>
</dbReference>
<dbReference type="Gene3D" id="1.10.10.10">
    <property type="entry name" value="Winged helix-like DNA-binding domain superfamily/Winged helix DNA-binding domain"/>
    <property type="match status" value="1"/>
</dbReference>
<dbReference type="HAMAP" id="MF_00245">
    <property type="entry name" value="UPF0122"/>
    <property type="match status" value="1"/>
</dbReference>
<dbReference type="InterPro" id="IPR013324">
    <property type="entry name" value="RNA_pol_sigma_r3/r4-like"/>
</dbReference>
<dbReference type="InterPro" id="IPR007394">
    <property type="entry name" value="UPF0122"/>
</dbReference>
<dbReference type="InterPro" id="IPR054831">
    <property type="entry name" value="UPF0122_fam_protein"/>
</dbReference>
<dbReference type="InterPro" id="IPR036388">
    <property type="entry name" value="WH-like_DNA-bd_sf"/>
</dbReference>
<dbReference type="NCBIfam" id="NF001068">
    <property type="entry name" value="PRK00118.1-4"/>
    <property type="match status" value="1"/>
</dbReference>
<dbReference type="NCBIfam" id="NF001070">
    <property type="entry name" value="PRK00118.1-6"/>
    <property type="match status" value="1"/>
</dbReference>
<dbReference type="NCBIfam" id="NF045758">
    <property type="entry name" value="YlxM"/>
    <property type="match status" value="1"/>
</dbReference>
<dbReference type="PANTHER" id="PTHR40083">
    <property type="entry name" value="UPF0122 PROTEIN CBO2450/CLC_2298"/>
    <property type="match status" value="1"/>
</dbReference>
<dbReference type="PANTHER" id="PTHR40083:SF1">
    <property type="entry name" value="UPF0122 PROTEIN YLXM"/>
    <property type="match status" value="1"/>
</dbReference>
<dbReference type="Pfam" id="PF04297">
    <property type="entry name" value="UPF0122"/>
    <property type="match status" value="1"/>
</dbReference>
<dbReference type="SUPFAM" id="SSF88659">
    <property type="entry name" value="Sigma3 and sigma4 domains of RNA polymerase sigma factors"/>
    <property type="match status" value="1"/>
</dbReference>
<name>Y1603_LACP3</name>
<reference key="1">
    <citation type="journal article" date="2006" name="Proc. Natl. Acad. Sci. U.S.A.">
        <title>Comparative genomics of the lactic acid bacteria.</title>
        <authorList>
            <person name="Makarova K.S."/>
            <person name="Slesarev A."/>
            <person name="Wolf Y.I."/>
            <person name="Sorokin A."/>
            <person name="Mirkin B."/>
            <person name="Koonin E.V."/>
            <person name="Pavlov A."/>
            <person name="Pavlova N."/>
            <person name="Karamychev V."/>
            <person name="Polouchine N."/>
            <person name="Shakhova V."/>
            <person name="Grigoriev I."/>
            <person name="Lou Y."/>
            <person name="Rohksar D."/>
            <person name="Lucas S."/>
            <person name="Huang K."/>
            <person name="Goodstein D.M."/>
            <person name="Hawkins T."/>
            <person name="Plengvidhya V."/>
            <person name="Welker D."/>
            <person name="Hughes J."/>
            <person name="Goh Y."/>
            <person name="Benson A."/>
            <person name="Baldwin K."/>
            <person name="Lee J.-H."/>
            <person name="Diaz-Muniz I."/>
            <person name="Dosti B."/>
            <person name="Smeianov V."/>
            <person name="Wechter W."/>
            <person name="Barabote R."/>
            <person name="Lorca G."/>
            <person name="Altermann E."/>
            <person name="Barrangou R."/>
            <person name="Ganesan B."/>
            <person name="Xie Y."/>
            <person name="Rawsthorne H."/>
            <person name="Tamir D."/>
            <person name="Parker C."/>
            <person name="Breidt F."/>
            <person name="Broadbent J.R."/>
            <person name="Hutkins R."/>
            <person name="O'Sullivan D."/>
            <person name="Steele J."/>
            <person name="Unlu G."/>
            <person name="Saier M.H. Jr."/>
            <person name="Klaenhammer T."/>
            <person name="Richardson P."/>
            <person name="Kozyavkin S."/>
            <person name="Weimer B.C."/>
            <person name="Mills D.A."/>
        </authorList>
    </citation>
    <scope>NUCLEOTIDE SEQUENCE [LARGE SCALE GENOMIC DNA]</scope>
    <source>
        <strain>ATCC 334 / BCRC 17002 / CCUG 31169 / CIP 107868 / KCTC 3260 / NRRL B-441</strain>
    </source>
</reference>
<protein>
    <recommendedName>
        <fullName evidence="1">UPF0122 protein LSEI_1603</fullName>
    </recommendedName>
</protein>
<keyword id="KW-1185">Reference proteome</keyword>
<proteinExistence type="inferred from homology"/>
<sequence>MEIEKNYRMNSLFEFYGPLLTDKQHAYLALYYGDDYSLGEIATEFNVSRQAVYDNIRRTEASLEEYEKKLHLFANYQAQNEAVDTLVSYARTHYPDDKALSTLLERVADQTAK</sequence>
<evidence type="ECO:0000255" key="1">
    <source>
        <dbReference type="HAMAP-Rule" id="MF_00245"/>
    </source>
</evidence>
<feature type="chain" id="PRO_1000012529" description="UPF0122 protein LSEI_1603">
    <location>
        <begin position="1"/>
        <end position="113"/>
    </location>
</feature>
<gene>
    <name type="ordered locus">LSEI_1603</name>
</gene>
<organism>
    <name type="scientific">Lacticaseibacillus paracasei (strain ATCC 334 / BCRC 17002 / CCUG 31169 / CIP 107868 / KCTC 3260 / NRRL B-441)</name>
    <name type="common">Lactobacillus paracasei</name>
    <dbReference type="NCBI Taxonomy" id="321967"/>
    <lineage>
        <taxon>Bacteria</taxon>
        <taxon>Bacillati</taxon>
        <taxon>Bacillota</taxon>
        <taxon>Bacilli</taxon>
        <taxon>Lactobacillales</taxon>
        <taxon>Lactobacillaceae</taxon>
        <taxon>Lacticaseibacillus</taxon>
    </lineage>
</organism>
<comment type="function">
    <text evidence="1">Might take part in the signal recognition particle (SRP) pathway. This is inferred from the conservation of its genetic proximity to ftsY/ffh. May be a regulatory protein.</text>
</comment>
<comment type="similarity">
    <text evidence="1">Belongs to the UPF0122 family.</text>
</comment>
<accession>Q038J5</accession>